<keyword id="KW-0025">Alternative splicing</keyword>
<keyword id="KW-0050">Antiport</keyword>
<keyword id="KW-0106">Calcium</keyword>
<keyword id="KW-0109">Calcium transport</keyword>
<keyword id="KW-1003">Cell membrane</keyword>
<keyword id="KW-0325">Glycoprotein</keyword>
<keyword id="KW-0406">Ion transport</keyword>
<keyword id="KW-0472">Membrane</keyword>
<keyword id="KW-0597">Phosphoprotein</keyword>
<keyword id="KW-1185">Reference proteome</keyword>
<keyword id="KW-0677">Repeat</keyword>
<keyword id="KW-0716">Sensory transduction</keyword>
<keyword id="KW-0732">Signal</keyword>
<keyword id="KW-0769">Symport</keyword>
<keyword id="KW-0812">Transmembrane</keyword>
<keyword id="KW-1133">Transmembrane helix</keyword>
<keyword id="KW-0813">Transport</keyword>
<keyword id="KW-0844">Vision</keyword>
<sequence length="1181" mass="129981">MGKLIRMGTQERRLLRPKRLHWSRLLFFLGMLIIGSTYQHLRRPQNPPSMWTKVSSQQPIKLAIRDLPNDEITVTDKDPPEASSEVEGEMLAPQDTVIIGEAAPSIAMEDTPNPPITTKITPTSLKNNYSPTTAGTRRQKENIPPTPSRAPSHFISTSGRQRVKSYTPKPRGGRKSSSPTHTREEGRMHTPSPAGAPRTISPTSTEKDSETTATYRMLEPRSERTAGKTSLKRMVPNTRTFLTREVETDLVTSPSLVGKNTLGSPRRGERNSSTTPLRAVLQPTPATSEEQVTASIRMGSTPATTEGSTAAQRIGNPLSGTSTPAVRIASVTDREKRPSTAHGTLVTPQVKAVLTTQVHRCVVVKPAPAVPMTPSPSMTAILFPEAPTSGPSALPPGWPNLHPKAEYPPDLFSVEDRRQGWVVLHIFGMTYVFVALAIVCDEYFVPALGVITDKLQISEDVAGATFMAAGGSAPELFTSLIGVFISHSNVGIGTIVGSAVFNILFVIGTCALFSREILNLTWWPLFRDVSFYILDLSMLIVFFLDSLIAWWESLLLLLAYALYVFTMKWNKQIERWVKEQLSRRPVAKVMALGDLSKPSDGAIEENEQQDNKKLKLPSVLTRGSSSASLHNSIIRSTIYHLMLHSLDPLGEARPSKDKQESLNQEARVLPQTKAESSSDEEEPAELPAVTVTPAPAPEDKGDQEEDPGCQEDVDEAEHRGDMTGEEGERETEAEGKKDEEGETEAERKEDGQEEETETKGKEKQEGETESEGKDEQEGETEAEGKEADHEGETEAEGKEVEHEGETEAEGTEDEQEGETEAEGKEVEQEGETEAEGKEVEHEVETEAERKETNHEGETEAEGKEADHEGETEAEGNVEHQGETEAEGKVEHEGETEAGEKDEHEGQSETQADDTEVKDGEGEAEANAEDQCETAQGEKGADGGGGSDGGDSEEEEDEEDEEEEEEEEEEEEEEESEEPLSLEWPESRQKQAIYLFLLPIVFPLWLTIPDVRRQEARKFFVITFLGSIIWIAMFSYLMVWWAHQVGETIGISEEIMGLTILAAGTSIPDLITSVIVARKGLGDMAVSSSVGSNIFDITVGLPVPWLLFSLINALQPIPVSSNGLFCAIVLLFLMLLFVIFSIASCKWRMNKILGFTMFLLYFVFLVISVMLEDRIISCPVSV</sequence>
<gene>
    <name type="primary">Slc24a1</name>
    <name type="synonym">Nckx1</name>
</gene>
<organism>
    <name type="scientific">Rattus norvegicus</name>
    <name type="common">Rat</name>
    <dbReference type="NCBI Taxonomy" id="10116"/>
    <lineage>
        <taxon>Eukaryota</taxon>
        <taxon>Metazoa</taxon>
        <taxon>Chordata</taxon>
        <taxon>Craniata</taxon>
        <taxon>Vertebrata</taxon>
        <taxon>Euteleostomi</taxon>
        <taxon>Mammalia</taxon>
        <taxon>Eutheria</taxon>
        <taxon>Euarchontoglires</taxon>
        <taxon>Glires</taxon>
        <taxon>Rodentia</taxon>
        <taxon>Myomorpha</taxon>
        <taxon>Muroidea</taxon>
        <taxon>Muridae</taxon>
        <taxon>Murinae</taxon>
        <taxon>Rattus</taxon>
    </lineage>
</organism>
<accession>Q9QZM6</accession>
<accession>Q62932</accession>
<comment type="function">
    <text evidence="1">Calcium, potassium:sodium antiporter that transports 1 Ca(2+) and 1 K(+) in exchange for 4 Na(+). Critical component of the visual transduction cascade, controlling the calcium concentration of outer segments during light and darkness. Light causes a rapid lowering of cytosolic free calcium in the outer segment of both retinal rod and cone photoreceptors and the light-induced lowering of calcium is caused by extrusion via this protein which plays a key role in the process of light adaptation.</text>
</comment>
<comment type="catalytic activity">
    <reaction evidence="2">
        <text>Ca(2+)(out) + K(+)(out) + 4 Na(+)(in) = Ca(2+)(in) + K(+)(in) + 4 Na(+)(out)</text>
        <dbReference type="Rhea" id="RHEA:69967"/>
        <dbReference type="ChEBI" id="CHEBI:29101"/>
        <dbReference type="ChEBI" id="CHEBI:29103"/>
        <dbReference type="ChEBI" id="CHEBI:29108"/>
    </reaction>
</comment>
<comment type="subcellular location">
    <subcellularLocation>
        <location evidence="2">Cell membrane</location>
        <topology evidence="3">Multi-pass membrane protein</topology>
    </subcellularLocation>
</comment>
<comment type="alternative products">
    <event type="alternative splicing"/>
    <isoform>
        <id>Q9QZM6-1</id>
        <name>1</name>
        <sequence type="displayed"/>
    </isoform>
    <isoform>
        <id>Q9QZM6-2</id>
        <name>2</name>
        <sequence type="described" ref="VSP_006161"/>
    </isoform>
    <isoform>
        <id>Q9QZM6-3</id>
        <name>3</name>
        <sequence type="described" ref="VSP_006162"/>
    </isoform>
    <isoform>
        <id>Q9QZM6-4</id>
        <name>4</name>
        <sequence type="described" ref="VSP_006163"/>
    </isoform>
</comment>
<comment type="tissue specificity">
    <text evidence="5">Highly expressed in the eye.</text>
</comment>
<comment type="PTM">
    <text evidence="2">The uncleaved signal sequence is required for efficient membrane targeting and proper membrane integration and topology.</text>
</comment>
<comment type="similarity">
    <text evidence="6">Belongs to the Ca(2+):cation antiporter (CaCA) (TC 2.A.19) family. SLC24A subfamily.</text>
</comment>
<reference key="1">
    <citation type="journal article" date="2000" name="Am. J. Physiol.">
        <title>Alternatively spliced isoforms of the rat eye sodium/calcium+potassium exchanger NCKX1.</title>
        <authorList>
            <person name="Poon S."/>
            <person name="Leach S."/>
            <person name="Li X.-F."/>
            <person name="Tucker J.E."/>
            <person name="Schnetkamp P.P.M."/>
            <person name="Lytton J."/>
        </authorList>
    </citation>
    <scope>NUCLEOTIDE SEQUENCE [MRNA]</scope>
    <scope>ALTERNATIVE SPLICING</scope>
    <scope>TISSUE SPECIFICITY</scope>
    <source>
        <strain>Sprague-Dawley</strain>
        <tissue>Eye</tissue>
    </source>
</reference>
<reference key="2">
    <citation type="submission" date="1996-02" db="EMBL/GenBank/DDBJ databases">
        <authorList>
            <person name="White K.E."/>
            <person name="Gesek F.A."/>
            <person name="Friedman P.A."/>
        </authorList>
    </citation>
    <scope>NUCLEOTIDE SEQUENCE [MRNA] OF 1067-1155</scope>
</reference>
<feature type="chain" id="PRO_0000223304" description="Sodium/potassium/calcium exchanger 1">
    <location>
        <begin position="1"/>
        <end position="1181"/>
    </location>
</feature>
<feature type="signal peptide" description="Not cleaved" evidence="2">
    <location>
        <begin position="1"/>
        <end status="unknown"/>
    </location>
</feature>
<feature type="topological domain" description="Extracellular" evidence="3">
    <location>
        <begin position="1"/>
        <end position="419"/>
    </location>
</feature>
<feature type="transmembrane region" description="Helical" evidence="3">
    <location>
        <begin position="420"/>
        <end position="440"/>
    </location>
</feature>
<feature type="topological domain" description="Cytoplasmic" evidence="3">
    <location>
        <begin position="441"/>
        <end position="464"/>
    </location>
</feature>
<feature type="transmembrane region" description="Helical" evidence="3">
    <location>
        <begin position="465"/>
        <end position="485"/>
    </location>
</feature>
<feature type="topological domain" description="Extracellular" evidence="3">
    <location>
        <begin position="486"/>
        <end position="491"/>
    </location>
</feature>
<feature type="transmembrane region" description="Helical" evidence="3">
    <location>
        <begin position="492"/>
        <end position="512"/>
    </location>
</feature>
<feature type="topological domain" description="Cytoplasmic" evidence="3">
    <location>
        <begin position="513"/>
        <end position="519"/>
    </location>
</feature>
<feature type="transmembrane region" description="Helical" evidence="3">
    <location>
        <begin position="520"/>
        <end position="544"/>
    </location>
</feature>
<feature type="topological domain" description="Extracellular" evidence="3">
    <location>
        <begin position="545"/>
        <end position="552"/>
    </location>
</feature>
<feature type="transmembrane region" description="Helical" evidence="3">
    <location>
        <begin position="553"/>
        <end position="569"/>
    </location>
</feature>
<feature type="topological domain" description="Cytoplasmic" evidence="3">
    <location>
        <begin position="570"/>
        <end position="989"/>
    </location>
</feature>
<feature type="transmembrane region" description="Helical" evidence="3">
    <location>
        <begin position="990"/>
        <end position="1010"/>
    </location>
</feature>
<feature type="topological domain" description="Extracellular" evidence="3">
    <location>
        <begin position="1011"/>
        <end position="1017"/>
    </location>
</feature>
<feature type="transmembrane region" description="Helical" evidence="3">
    <location>
        <begin position="1018"/>
        <end position="1038"/>
    </location>
</feature>
<feature type="topological domain" description="Cytoplasmic" evidence="3">
    <location>
        <begin position="1039"/>
        <end position="1053"/>
    </location>
</feature>
<feature type="transmembrane region" description="Helical" evidence="3">
    <location>
        <begin position="1054"/>
        <end position="1074"/>
    </location>
</feature>
<feature type="topological domain" description="Extracellular" evidence="3">
    <location>
        <begin position="1075"/>
        <end position="1092"/>
    </location>
</feature>
<feature type="transmembrane region" description="Helical" evidence="3">
    <location>
        <begin position="1093"/>
        <end position="1113"/>
    </location>
</feature>
<feature type="topological domain" description="Cytoplasmic" evidence="3">
    <location>
        <begin position="1114"/>
        <end position="1121"/>
    </location>
</feature>
<feature type="transmembrane region" description="Helical" evidence="3">
    <location>
        <begin position="1122"/>
        <end position="1142"/>
    </location>
</feature>
<feature type="topological domain" description="Extracellular" evidence="3">
    <location>
        <begin position="1143"/>
        <end position="1150"/>
    </location>
</feature>
<feature type="transmembrane region" description="Helical" evidence="3">
    <location>
        <begin position="1151"/>
        <end position="1171"/>
    </location>
</feature>
<feature type="topological domain" description="Cytoplasmic" evidence="3">
    <location>
        <begin position="1172"/>
        <end position="1181"/>
    </location>
</feature>
<feature type="repeat" description="Alpha-1">
    <location>
        <begin position="461"/>
        <end position="501"/>
    </location>
</feature>
<feature type="repeat" description="1">
    <location>
        <begin position="730"/>
        <end position="741"/>
    </location>
</feature>
<feature type="repeat" description="2">
    <location>
        <begin position="742"/>
        <end position="754"/>
    </location>
</feature>
<feature type="repeat" description="3">
    <location>
        <begin position="755"/>
        <end position="766"/>
    </location>
</feature>
<feature type="repeat" description="4">
    <location>
        <begin position="767"/>
        <end position="778"/>
    </location>
</feature>
<feature type="repeat" description="5">
    <location>
        <begin position="779"/>
        <end position="791"/>
    </location>
</feature>
<feature type="repeat" description="6">
    <location>
        <begin position="792"/>
        <end position="804"/>
    </location>
</feature>
<feature type="repeat" description="7">
    <location>
        <begin position="805"/>
        <end position="817"/>
    </location>
</feature>
<feature type="repeat" description="8">
    <location>
        <begin position="818"/>
        <end position="830"/>
    </location>
</feature>
<feature type="repeat" description="9">
    <location>
        <begin position="831"/>
        <end position="843"/>
    </location>
</feature>
<feature type="repeat" description="10">
    <location>
        <begin position="844"/>
        <end position="856"/>
    </location>
</feature>
<feature type="repeat" description="11">
    <location>
        <begin position="857"/>
        <end position="869"/>
    </location>
</feature>
<feature type="repeat" description="12">
    <location>
        <begin position="870"/>
        <end position="881"/>
    </location>
</feature>
<feature type="repeat" description="13">
    <location>
        <begin position="882"/>
        <end position="893"/>
    </location>
</feature>
<feature type="repeat" description="14">
    <location>
        <begin position="894"/>
        <end position="905"/>
    </location>
</feature>
<feature type="repeat" description="Alpha-2">
    <location>
        <begin position="1061"/>
        <end position="1092"/>
    </location>
</feature>
<feature type="region of interest" description="Disordered" evidence="4">
    <location>
        <begin position="107"/>
        <end position="232"/>
    </location>
</feature>
<feature type="region of interest" description="Disordered" evidence="4">
    <location>
        <begin position="255"/>
        <end position="276"/>
    </location>
</feature>
<feature type="region of interest" description="Disordered" evidence="4">
    <location>
        <begin position="300"/>
        <end position="323"/>
    </location>
</feature>
<feature type="region of interest" description="Disordered" evidence="4">
    <location>
        <begin position="598"/>
        <end position="617"/>
    </location>
</feature>
<feature type="region of interest" description="Disordered" evidence="4">
    <location>
        <begin position="650"/>
        <end position="983"/>
    </location>
</feature>
<feature type="region of interest" description="14 X approximate tandem repeats">
    <location>
        <begin position="730"/>
        <end position="905"/>
    </location>
</feature>
<feature type="compositionally biased region" description="Polar residues" evidence="4">
    <location>
        <begin position="124"/>
        <end position="136"/>
    </location>
</feature>
<feature type="compositionally biased region" description="Polar residues" evidence="4">
    <location>
        <begin position="301"/>
        <end position="311"/>
    </location>
</feature>
<feature type="compositionally biased region" description="Acidic residues" evidence="4">
    <location>
        <begin position="701"/>
        <end position="715"/>
    </location>
</feature>
<feature type="compositionally biased region" description="Basic and acidic residues" evidence="4">
    <location>
        <begin position="730"/>
        <end position="750"/>
    </location>
</feature>
<feature type="compositionally biased region" description="Basic and acidic residues" evidence="4">
    <location>
        <begin position="757"/>
        <end position="775"/>
    </location>
</feature>
<feature type="compositionally biased region" description="Basic and acidic residues" evidence="4">
    <location>
        <begin position="782"/>
        <end position="805"/>
    </location>
</feature>
<feature type="compositionally biased region" description="Acidic residues" evidence="4">
    <location>
        <begin position="806"/>
        <end position="820"/>
    </location>
</feature>
<feature type="compositionally biased region" description="Basic and acidic residues" evidence="4">
    <location>
        <begin position="834"/>
        <end position="906"/>
    </location>
</feature>
<feature type="compositionally biased region" description="Acidic residues" evidence="4">
    <location>
        <begin position="921"/>
        <end position="931"/>
    </location>
</feature>
<feature type="compositionally biased region" description="Acidic residues" evidence="4">
    <location>
        <begin position="949"/>
        <end position="979"/>
    </location>
</feature>
<feature type="modified residue" description="Phosphoserine" evidence="3">
    <location>
        <position position="625"/>
    </location>
</feature>
<feature type="modified residue" description="Phosphothreonine" evidence="1">
    <location>
        <position position="690"/>
    </location>
</feature>
<feature type="glycosylation site" description="N-linked (GlcNAc...) asparagine" evidence="3">
    <location>
        <position position="271"/>
    </location>
</feature>
<feature type="splice variant" id="VSP_006161" description="In isoform 2." evidence="6">
    <location>
        <begin position="598"/>
        <end position="710"/>
    </location>
</feature>
<feature type="splice variant" id="VSP_006162" description="In isoform 3." evidence="6">
    <location>
        <begin position="616"/>
        <end position="710"/>
    </location>
</feature>
<feature type="splice variant" id="VSP_006163" description="In isoform 4." evidence="6">
    <location>
        <begin position="652"/>
        <end position="679"/>
    </location>
</feature>
<evidence type="ECO:0000250" key="1">
    <source>
        <dbReference type="UniProtKB" id="O60721"/>
    </source>
</evidence>
<evidence type="ECO:0000250" key="2">
    <source>
        <dbReference type="UniProtKB" id="Q28139"/>
    </source>
</evidence>
<evidence type="ECO:0000255" key="3"/>
<evidence type="ECO:0000256" key="4">
    <source>
        <dbReference type="SAM" id="MobiDB-lite"/>
    </source>
</evidence>
<evidence type="ECO:0000269" key="5">
    <source>
    </source>
</evidence>
<evidence type="ECO:0000305" key="6"/>
<proteinExistence type="evidence at transcript level"/>
<dbReference type="EMBL" id="AF176688">
    <property type="protein sequence ID" value="AAD53121.1"/>
    <property type="molecule type" value="mRNA"/>
</dbReference>
<dbReference type="EMBL" id="U49235">
    <property type="protein sequence ID" value="AAB37753.1"/>
    <property type="molecule type" value="mRNA"/>
</dbReference>
<dbReference type="RefSeq" id="NP_064475.1">
    <molecule id="Q9QZM6-1"/>
    <property type="nucleotide sequence ID" value="NM_020090.1"/>
</dbReference>
<dbReference type="RefSeq" id="XP_017451362.1">
    <property type="nucleotide sequence ID" value="XM_017595873.1"/>
</dbReference>
<dbReference type="RefSeq" id="XP_063122114.1">
    <molecule id="Q9QZM6-2"/>
    <property type="nucleotide sequence ID" value="XM_063266044.1"/>
</dbReference>
<dbReference type="FunCoup" id="Q9QZM6">
    <property type="interactions" value="70"/>
</dbReference>
<dbReference type="STRING" id="10116.ENSRNOP00000074571"/>
<dbReference type="GlyCosmos" id="Q9QZM6">
    <property type="glycosylation" value="1 site, No reported glycans"/>
</dbReference>
<dbReference type="GlyGen" id="Q9QZM6">
    <property type="glycosylation" value="5 sites"/>
</dbReference>
<dbReference type="PhosphoSitePlus" id="Q9QZM6"/>
<dbReference type="PaxDb" id="10116-ENSRNOP00000051962"/>
<dbReference type="Ensembl" id="ENSRNOT00000077152.2">
    <molecule id="Q9QZM6-1"/>
    <property type="protein sequence ID" value="ENSRNOP00000074571.2"/>
    <property type="gene ID" value="ENSRNOG00000052051.2"/>
</dbReference>
<dbReference type="Ensembl" id="ENSRNOT00000100509.1">
    <molecule id="Q9QZM6-3"/>
    <property type="protein sequence ID" value="ENSRNOP00000087860.1"/>
    <property type="gene ID" value="ENSRNOG00000052051.2"/>
</dbReference>
<dbReference type="Ensembl" id="ENSRNOT00000101835.1">
    <molecule id="Q9QZM6-2"/>
    <property type="protein sequence ID" value="ENSRNOP00000091100.1"/>
    <property type="gene ID" value="ENSRNOG00000052051.2"/>
</dbReference>
<dbReference type="Ensembl" id="ENSRNOT00000116039.1">
    <molecule id="Q9QZM6-4"/>
    <property type="protein sequence ID" value="ENSRNOP00000087726.1"/>
    <property type="gene ID" value="ENSRNOG00000052051.2"/>
</dbReference>
<dbReference type="GeneID" id="56814"/>
<dbReference type="KEGG" id="rno:56814"/>
<dbReference type="UCSC" id="RGD:620080">
    <molecule id="Q9QZM6-1"/>
    <property type="organism name" value="rat"/>
</dbReference>
<dbReference type="AGR" id="RGD:620080"/>
<dbReference type="CTD" id="9187"/>
<dbReference type="RGD" id="620080">
    <property type="gene designation" value="Slc24a1"/>
</dbReference>
<dbReference type="eggNOG" id="KOG1307">
    <property type="taxonomic scope" value="Eukaryota"/>
</dbReference>
<dbReference type="GeneTree" id="ENSGT01030000234532"/>
<dbReference type="InParanoid" id="Q9QZM6"/>
<dbReference type="OMA" id="HNSTIRT"/>
<dbReference type="OrthoDB" id="87104at9989"/>
<dbReference type="PhylomeDB" id="Q9QZM6"/>
<dbReference type="Reactome" id="R-RNO-425561">
    <property type="pathway name" value="Sodium/Calcium exchangers"/>
</dbReference>
<dbReference type="PRO" id="PR:Q9QZM6"/>
<dbReference type="Proteomes" id="UP000002494">
    <property type="component" value="Chromosome 8"/>
</dbReference>
<dbReference type="GO" id="GO:0009986">
    <property type="term" value="C:cell surface"/>
    <property type="evidence" value="ECO:0000314"/>
    <property type="project" value="RGD"/>
</dbReference>
<dbReference type="GO" id="GO:0005886">
    <property type="term" value="C:plasma membrane"/>
    <property type="evidence" value="ECO:0000266"/>
    <property type="project" value="RGD"/>
</dbReference>
<dbReference type="GO" id="GO:0005262">
    <property type="term" value="F:calcium channel activity"/>
    <property type="evidence" value="ECO:0000318"/>
    <property type="project" value="GO_Central"/>
</dbReference>
<dbReference type="GO" id="GO:0008273">
    <property type="term" value="F:calcium, potassium:sodium antiporter activity"/>
    <property type="evidence" value="ECO:0000266"/>
    <property type="project" value="RGD"/>
</dbReference>
<dbReference type="GO" id="GO:0015293">
    <property type="term" value="F:symporter activity"/>
    <property type="evidence" value="ECO:0007669"/>
    <property type="project" value="UniProtKB-KW"/>
</dbReference>
<dbReference type="GO" id="GO:0070588">
    <property type="term" value="P:calcium ion transmembrane transport"/>
    <property type="evidence" value="ECO:0000314"/>
    <property type="project" value="RGD"/>
</dbReference>
<dbReference type="GO" id="GO:0006874">
    <property type="term" value="P:intracellular calcium ion homeostasis"/>
    <property type="evidence" value="ECO:0000266"/>
    <property type="project" value="RGD"/>
</dbReference>
<dbReference type="GO" id="GO:0060292">
    <property type="term" value="P:long-term synaptic depression"/>
    <property type="evidence" value="ECO:0000318"/>
    <property type="project" value="GO_Central"/>
</dbReference>
<dbReference type="GO" id="GO:0060291">
    <property type="term" value="P:long-term synaptic potentiation"/>
    <property type="evidence" value="ECO:0000318"/>
    <property type="project" value="GO_Central"/>
</dbReference>
<dbReference type="GO" id="GO:0071805">
    <property type="term" value="P:potassium ion transmembrane transport"/>
    <property type="evidence" value="ECO:0000266"/>
    <property type="project" value="RGD"/>
</dbReference>
<dbReference type="GO" id="GO:0035725">
    <property type="term" value="P:sodium ion transmembrane transport"/>
    <property type="evidence" value="ECO:0000266"/>
    <property type="project" value="RGD"/>
</dbReference>
<dbReference type="GO" id="GO:0007601">
    <property type="term" value="P:visual perception"/>
    <property type="evidence" value="ECO:0007669"/>
    <property type="project" value="UniProtKB-KW"/>
</dbReference>
<dbReference type="FunFam" id="1.20.1420.30:FF:000002">
    <property type="entry name" value="Sodium/potassium/calcium exchanger 2 isoform 1"/>
    <property type="match status" value="1"/>
</dbReference>
<dbReference type="FunFam" id="1.20.1420.30:FF:000004">
    <property type="entry name" value="Sodium/potassium/calcium exchanger 2 isoform 1"/>
    <property type="match status" value="1"/>
</dbReference>
<dbReference type="Gene3D" id="1.20.1420.30">
    <property type="entry name" value="NCX, central ion-binding region"/>
    <property type="match status" value="2"/>
</dbReference>
<dbReference type="InterPro" id="IPR004481">
    <property type="entry name" value="K/Na/Ca-exchanger"/>
</dbReference>
<dbReference type="InterPro" id="IPR004837">
    <property type="entry name" value="NaCa_Exmemb"/>
</dbReference>
<dbReference type="InterPro" id="IPR044880">
    <property type="entry name" value="NCX_ion-bd_dom_sf"/>
</dbReference>
<dbReference type="InterPro" id="IPR004817">
    <property type="entry name" value="SLC24A1"/>
</dbReference>
<dbReference type="NCBIfam" id="TIGR00927">
    <property type="entry name" value="2A1904"/>
    <property type="match status" value="1"/>
</dbReference>
<dbReference type="NCBIfam" id="TIGR00367">
    <property type="entry name" value="calcium/sodium antiporter"/>
    <property type="match status" value="1"/>
</dbReference>
<dbReference type="PANTHER" id="PTHR10846">
    <property type="entry name" value="SODIUM/POTASSIUM/CALCIUM EXCHANGER"/>
    <property type="match status" value="1"/>
</dbReference>
<dbReference type="PANTHER" id="PTHR10846:SF36">
    <property type="entry name" value="SODIUM_POTASSIUM_CALCIUM EXCHANGER 1"/>
    <property type="match status" value="1"/>
</dbReference>
<dbReference type="Pfam" id="PF01699">
    <property type="entry name" value="Na_Ca_ex"/>
    <property type="match status" value="2"/>
</dbReference>
<name>NCKX1_RAT</name>
<protein>
    <recommendedName>
        <fullName>Sodium/potassium/calcium exchanger 1</fullName>
    </recommendedName>
    <alternativeName>
        <fullName>Na(+)/K(+)/Ca(2+)-exchange protein 1</fullName>
    </alternativeName>
    <alternativeName>
        <fullName>Retinal rod Na-Ca+K exchanger</fullName>
    </alternativeName>
    <alternativeName>
        <fullName>Solute carrier family 24 member 1</fullName>
    </alternativeName>
</protein>